<dbReference type="EMBL" id="AE003852">
    <property type="protein sequence ID" value="AAF93810.1"/>
    <property type="status" value="ALT_INIT"/>
    <property type="molecule type" value="Genomic_DNA"/>
</dbReference>
<dbReference type="PIR" id="B82298">
    <property type="entry name" value="B82298"/>
</dbReference>
<dbReference type="RefSeq" id="NP_230293.2">
    <property type="nucleotide sequence ID" value="NC_002505.1"/>
</dbReference>
<dbReference type="RefSeq" id="WP_001123656.1">
    <property type="nucleotide sequence ID" value="NZ_LT906614.1"/>
</dbReference>
<dbReference type="SMR" id="Q9KU79"/>
<dbReference type="STRING" id="243277.VC_0644"/>
<dbReference type="DNASU" id="2615434"/>
<dbReference type="EnsemblBacteria" id="AAF93810">
    <property type="protein sequence ID" value="AAF93810"/>
    <property type="gene ID" value="VC_0644"/>
</dbReference>
<dbReference type="GeneID" id="69720600"/>
<dbReference type="KEGG" id="vch:VC_0644"/>
<dbReference type="PATRIC" id="fig|243277.26.peg.614"/>
<dbReference type="eggNOG" id="COG0858">
    <property type="taxonomic scope" value="Bacteria"/>
</dbReference>
<dbReference type="HOGENOM" id="CLU_089475_5_0_6"/>
<dbReference type="Proteomes" id="UP000000584">
    <property type="component" value="Chromosome 1"/>
</dbReference>
<dbReference type="GO" id="GO:0005829">
    <property type="term" value="C:cytosol"/>
    <property type="evidence" value="ECO:0000318"/>
    <property type="project" value="GO_Central"/>
</dbReference>
<dbReference type="GO" id="GO:0043024">
    <property type="term" value="F:ribosomal small subunit binding"/>
    <property type="evidence" value="ECO:0000318"/>
    <property type="project" value="GO_Central"/>
</dbReference>
<dbReference type="GO" id="GO:0030490">
    <property type="term" value="P:maturation of SSU-rRNA"/>
    <property type="evidence" value="ECO:0007669"/>
    <property type="project" value="UniProtKB-UniRule"/>
</dbReference>
<dbReference type="GO" id="GO:0042254">
    <property type="term" value="P:ribosome biogenesis"/>
    <property type="evidence" value="ECO:0000318"/>
    <property type="project" value="GO_Central"/>
</dbReference>
<dbReference type="FunFam" id="3.30.300.20:FF:000007">
    <property type="entry name" value="Ribosome-binding factor A"/>
    <property type="match status" value="1"/>
</dbReference>
<dbReference type="Gene3D" id="3.30.300.20">
    <property type="match status" value="1"/>
</dbReference>
<dbReference type="HAMAP" id="MF_00003">
    <property type="entry name" value="RbfA"/>
    <property type="match status" value="1"/>
</dbReference>
<dbReference type="InterPro" id="IPR015946">
    <property type="entry name" value="KH_dom-like_a/b"/>
</dbReference>
<dbReference type="InterPro" id="IPR000238">
    <property type="entry name" value="RbfA"/>
</dbReference>
<dbReference type="InterPro" id="IPR023799">
    <property type="entry name" value="RbfA_dom_sf"/>
</dbReference>
<dbReference type="InterPro" id="IPR020053">
    <property type="entry name" value="Ribosome-bd_factorA_CS"/>
</dbReference>
<dbReference type="NCBIfam" id="TIGR00082">
    <property type="entry name" value="rbfA"/>
    <property type="match status" value="1"/>
</dbReference>
<dbReference type="PANTHER" id="PTHR33515">
    <property type="entry name" value="RIBOSOME-BINDING FACTOR A, CHLOROPLASTIC-RELATED"/>
    <property type="match status" value="1"/>
</dbReference>
<dbReference type="PANTHER" id="PTHR33515:SF1">
    <property type="entry name" value="RIBOSOME-BINDING FACTOR A, CHLOROPLASTIC-RELATED"/>
    <property type="match status" value="1"/>
</dbReference>
<dbReference type="Pfam" id="PF02033">
    <property type="entry name" value="RBFA"/>
    <property type="match status" value="1"/>
</dbReference>
<dbReference type="SUPFAM" id="SSF89919">
    <property type="entry name" value="Ribosome-binding factor A, RbfA"/>
    <property type="match status" value="1"/>
</dbReference>
<dbReference type="PROSITE" id="PS01319">
    <property type="entry name" value="RBFA"/>
    <property type="match status" value="1"/>
</dbReference>
<keyword id="KW-0963">Cytoplasm</keyword>
<keyword id="KW-1185">Reference proteome</keyword>
<keyword id="KW-0690">Ribosome biogenesis</keyword>
<protein>
    <recommendedName>
        <fullName evidence="1">Ribosome-binding factor A</fullName>
    </recommendedName>
</protein>
<name>RBFA_VIBCH</name>
<gene>
    <name evidence="1" type="primary">rbfA</name>
    <name type="ordered locus">VC_0644</name>
</gene>
<evidence type="ECO:0000255" key="1">
    <source>
        <dbReference type="HAMAP-Rule" id="MF_00003"/>
    </source>
</evidence>
<evidence type="ECO:0000305" key="2"/>
<feature type="chain" id="PRO_0000102765" description="Ribosome-binding factor A">
    <location>
        <begin position="1"/>
        <end position="132"/>
    </location>
</feature>
<accession>Q9KU79</accession>
<reference key="1">
    <citation type="journal article" date="2000" name="Nature">
        <title>DNA sequence of both chromosomes of the cholera pathogen Vibrio cholerae.</title>
        <authorList>
            <person name="Heidelberg J.F."/>
            <person name="Eisen J.A."/>
            <person name="Nelson W.C."/>
            <person name="Clayton R.A."/>
            <person name="Gwinn M.L."/>
            <person name="Dodson R.J."/>
            <person name="Haft D.H."/>
            <person name="Hickey E.K."/>
            <person name="Peterson J.D."/>
            <person name="Umayam L.A."/>
            <person name="Gill S.R."/>
            <person name="Nelson K.E."/>
            <person name="Read T.D."/>
            <person name="Tettelin H."/>
            <person name="Richardson D.L."/>
            <person name="Ermolaeva M.D."/>
            <person name="Vamathevan J.J."/>
            <person name="Bass S."/>
            <person name="Qin H."/>
            <person name="Dragoi I."/>
            <person name="Sellers P."/>
            <person name="McDonald L.A."/>
            <person name="Utterback T.R."/>
            <person name="Fleischmann R.D."/>
            <person name="Nierman W.C."/>
            <person name="White O."/>
            <person name="Salzberg S.L."/>
            <person name="Smith H.O."/>
            <person name="Colwell R.R."/>
            <person name="Mekalanos J.J."/>
            <person name="Venter J.C."/>
            <person name="Fraser C.M."/>
        </authorList>
    </citation>
    <scope>NUCLEOTIDE SEQUENCE [LARGE SCALE GENOMIC DNA]</scope>
    <source>
        <strain>ATCC 39315 / El Tor Inaba N16961</strain>
    </source>
</reference>
<proteinExistence type="inferred from homology"/>
<sequence>MPKEFSRTQRVAQQLQKELAMILQREVRDSRLGMVTISDVEVSRDLAYAKVFVTFLCIGEQTPESCLAALREHEVQIRMMLGKQIRLRLTPEIRFYYDNTLVEGMRMSNLVTEVINSDKRRKHEAGRDEDEA</sequence>
<comment type="function">
    <text evidence="1">One of several proteins that assist in the late maturation steps of the functional core of the 30S ribosomal subunit. Associates with free 30S ribosomal subunits (but not with 30S subunits that are part of 70S ribosomes or polysomes). Required for efficient processing of 16S rRNA. May interact with the 5'-terminal helix region of 16S rRNA.</text>
</comment>
<comment type="subunit">
    <text evidence="1">Monomer. Binds 30S ribosomal subunits, but not 50S ribosomal subunits or 70S ribosomes.</text>
</comment>
<comment type="subcellular location">
    <subcellularLocation>
        <location evidence="1">Cytoplasm</location>
    </subcellularLocation>
</comment>
<comment type="similarity">
    <text evidence="1">Belongs to the RbfA family.</text>
</comment>
<comment type="sequence caution" evidence="2">
    <conflict type="erroneous initiation">
        <sequence resource="EMBL-CDS" id="AAF93810"/>
    </conflict>
    <text>Extended N-terminus.</text>
</comment>
<organism>
    <name type="scientific">Vibrio cholerae serotype O1 (strain ATCC 39315 / El Tor Inaba N16961)</name>
    <dbReference type="NCBI Taxonomy" id="243277"/>
    <lineage>
        <taxon>Bacteria</taxon>
        <taxon>Pseudomonadati</taxon>
        <taxon>Pseudomonadota</taxon>
        <taxon>Gammaproteobacteria</taxon>
        <taxon>Vibrionales</taxon>
        <taxon>Vibrionaceae</taxon>
        <taxon>Vibrio</taxon>
    </lineage>
</organism>